<reference key="1">
    <citation type="submission" date="2007-04" db="EMBL/GenBank/DDBJ databases">
        <title>Complete sequence of Shewanella putrefaciens CN-32.</title>
        <authorList>
            <consortium name="US DOE Joint Genome Institute"/>
            <person name="Copeland A."/>
            <person name="Lucas S."/>
            <person name="Lapidus A."/>
            <person name="Barry K."/>
            <person name="Detter J.C."/>
            <person name="Glavina del Rio T."/>
            <person name="Hammon N."/>
            <person name="Israni S."/>
            <person name="Dalin E."/>
            <person name="Tice H."/>
            <person name="Pitluck S."/>
            <person name="Chain P."/>
            <person name="Malfatti S."/>
            <person name="Shin M."/>
            <person name="Vergez L."/>
            <person name="Schmutz J."/>
            <person name="Larimer F."/>
            <person name="Land M."/>
            <person name="Hauser L."/>
            <person name="Kyrpides N."/>
            <person name="Mikhailova N."/>
            <person name="Romine M.F."/>
            <person name="Fredrickson J."/>
            <person name="Tiedje J."/>
            <person name="Richardson P."/>
        </authorList>
    </citation>
    <scope>NUCLEOTIDE SEQUENCE [LARGE SCALE GENOMIC DNA]</scope>
    <source>
        <strain>CN-32 / ATCC BAA-453</strain>
    </source>
</reference>
<evidence type="ECO:0000255" key="1">
    <source>
        <dbReference type="HAMAP-Rule" id="MF_00023"/>
    </source>
</evidence>
<sequence>MVKKKSSKAAPATIARNKRATFEYRFEEKMEAGLSLMGWEVKSIRMGKVNLSDCYVFLKNGEAFMHGCTIIPLNTASTHVVCDPLRLKKLLLSRKELDKLAGLVERQGYSIIPISMYWRKGAWVKVEIGLGKGKKDHDKREDTKAREWEVEKARVMKKEKTHG</sequence>
<name>SSRP_SHEPC</name>
<gene>
    <name evidence="1" type="primary">smpB</name>
    <name type="ordered locus">Sputcn32_1229</name>
</gene>
<comment type="function">
    <text evidence="1">Required for rescue of stalled ribosomes mediated by trans-translation. Binds to transfer-messenger RNA (tmRNA), required for stable association of tmRNA with ribosomes. tmRNA and SmpB together mimic tRNA shape, replacing the anticodon stem-loop with SmpB. tmRNA is encoded by the ssrA gene; the 2 termini fold to resemble tRNA(Ala) and it encodes a 'tag peptide', a short internal open reading frame. During trans-translation Ala-aminoacylated tmRNA acts like a tRNA, entering the A-site of stalled ribosomes, displacing the stalled mRNA. The ribosome then switches to translate the ORF on the tmRNA; the nascent peptide is terminated with the 'tag peptide' encoded by the tmRNA and targeted for degradation. The ribosome is freed to recommence translation, which seems to be the essential function of trans-translation.</text>
</comment>
<comment type="subcellular location">
    <subcellularLocation>
        <location evidence="1">Cytoplasm</location>
    </subcellularLocation>
    <text evidence="1">The tmRNA-SmpB complex associates with stalled 70S ribosomes.</text>
</comment>
<comment type="similarity">
    <text evidence="1">Belongs to the SmpB family.</text>
</comment>
<dbReference type="EMBL" id="CP000681">
    <property type="protein sequence ID" value="ABP74957.1"/>
    <property type="molecule type" value="Genomic_DNA"/>
</dbReference>
<dbReference type="SMR" id="A4Y4S4"/>
<dbReference type="STRING" id="319224.Sputcn32_1229"/>
<dbReference type="KEGG" id="spc:Sputcn32_1229"/>
<dbReference type="eggNOG" id="COG0691">
    <property type="taxonomic scope" value="Bacteria"/>
</dbReference>
<dbReference type="HOGENOM" id="CLU_108953_3_0_6"/>
<dbReference type="GO" id="GO:0005829">
    <property type="term" value="C:cytosol"/>
    <property type="evidence" value="ECO:0007669"/>
    <property type="project" value="TreeGrafter"/>
</dbReference>
<dbReference type="GO" id="GO:0003723">
    <property type="term" value="F:RNA binding"/>
    <property type="evidence" value="ECO:0007669"/>
    <property type="project" value="UniProtKB-UniRule"/>
</dbReference>
<dbReference type="GO" id="GO:0070929">
    <property type="term" value="P:trans-translation"/>
    <property type="evidence" value="ECO:0007669"/>
    <property type="project" value="UniProtKB-UniRule"/>
</dbReference>
<dbReference type="CDD" id="cd09294">
    <property type="entry name" value="SmpB"/>
    <property type="match status" value="1"/>
</dbReference>
<dbReference type="Gene3D" id="2.40.280.10">
    <property type="match status" value="1"/>
</dbReference>
<dbReference type="HAMAP" id="MF_00023">
    <property type="entry name" value="SmpB"/>
    <property type="match status" value="1"/>
</dbReference>
<dbReference type="InterPro" id="IPR023620">
    <property type="entry name" value="SmpB"/>
</dbReference>
<dbReference type="InterPro" id="IPR000037">
    <property type="entry name" value="SsrA-bd_prot"/>
</dbReference>
<dbReference type="InterPro" id="IPR020081">
    <property type="entry name" value="SsrA-bd_prot_CS"/>
</dbReference>
<dbReference type="NCBIfam" id="NF003843">
    <property type="entry name" value="PRK05422.1"/>
    <property type="match status" value="1"/>
</dbReference>
<dbReference type="NCBIfam" id="TIGR00086">
    <property type="entry name" value="smpB"/>
    <property type="match status" value="1"/>
</dbReference>
<dbReference type="PANTHER" id="PTHR30308:SF2">
    <property type="entry name" value="SSRA-BINDING PROTEIN"/>
    <property type="match status" value="1"/>
</dbReference>
<dbReference type="PANTHER" id="PTHR30308">
    <property type="entry name" value="TMRNA-BINDING COMPONENT OF TRANS-TRANSLATION TAGGING COMPLEX"/>
    <property type="match status" value="1"/>
</dbReference>
<dbReference type="Pfam" id="PF01668">
    <property type="entry name" value="SmpB"/>
    <property type="match status" value="1"/>
</dbReference>
<dbReference type="SUPFAM" id="SSF74982">
    <property type="entry name" value="Small protein B (SmpB)"/>
    <property type="match status" value="1"/>
</dbReference>
<dbReference type="PROSITE" id="PS01317">
    <property type="entry name" value="SSRP"/>
    <property type="match status" value="1"/>
</dbReference>
<organism>
    <name type="scientific">Shewanella putrefaciens (strain CN-32 / ATCC BAA-453)</name>
    <dbReference type="NCBI Taxonomy" id="319224"/>
    <lineage>
        <taxon>Bacteria</taxon>
        <taxon>Pseudomonadati</taxon>
        <taxon>Pseudomonadota</taxon>
        <taxon>Gammaproteobacteria</taxon>
        <taxon>Alteromonadales</taxon>
        <taxon>Shewanellaceae</taxon>
        <taxon>Shewanella</taxon>
    </lineage>
</organism>
<keyword id="KW-0963">Cytoplasm</keyword>
<keyword id="KW-0694">RNA-binding</keyword>
<accession>A4Y4S4</accession>
<feature type="chain" id="PRO_1000002141" description="SsrA-binding protein">
    <location>
        <begin position="1"/>
        <end position="163"/>
    </location>
</feature>
<protein>
    <recommendedName>
        <fullName evidence="1">SsrA-binding protein</fullName>
    </recommendedName>
    <alternativeName>
        <fullName evidence="1">Small protein B</fullName>
    </alternativeName>
</protein>
<proteinExistence type="inferred from homology"/>